<reference key="1">
    <citation type="submission" date="2007-08" db="EMBL/GenBank/DDBJ databases">
        <title>Complete sequence of Shewanella sediminis HAW-EB3.</title>
        <authorList>
            <consortium name="US DOE Joint Genome Institute"/>
            <person name="Copeland A."/>
            <person name="Lucas S."/>
            <person name="Lapidus A."/>
            <person name="Barry K."/>
            <person name="Glavina del Rio T."/>
            <person name="Dalin E."/>
            <person name="Tice H."/>
            <person name="Pitluck S."/>
            <person name="Chertkov O."/>
            <person name="Brettin T."/>
            <person name="Bruce D."/>
            <person name="Detter J.C."/>
            <person name="Han C."/>
            <person name="Schmutz J."/>
            <person name="Larimer F."/>
            <person name="Land M."/>
            <person name="Hauser L."/>
            <person name="Kyrpides N."/>
            <person name="Kim E."/>
            <person name="Zhao J.-S."/>
            <person name="Richardson P."/>
        </authorList>
    </citation>
    <scope>NUCLEOTIDE SEQUENCE [LARGE SCALE GENOMIC DNA]</scope>
    <source>
        <strain>HAW-EB3</strain>
    </source>
</reference>
<feature type="chain" id="PRO_1000073832" description="Argininosuccinate synthase">
    <location>
        <begin position="1"/>
        <end position="407"/>
    </location>
</feature>
<feature type="binding site" evidence="1">
    <location>
        <begin position="16"/>
        <end position="24"/>
    </location>
    <ligand>
        <name>ATP</name>
        <dbReference type="ChEBI" id="CHEBI:30616"/>
    </ligand>
</feature>
<feature type="binding site" evidence="1">
    <location>
        <position position="44"/>
    </location>
    <ligand>
        <name>ATP</name>
        <dbReference type="ChEBI" id="CHEBI:30616"/>
    </ligand>
</feature>
<feature type="binding site" evidence="1">
    <location>
        <position position="96"/>
    </location>
    <ligand>
        <name>L-citrulline</name>
        <dbReference type="ChEBI" id="CHEBI:57743"/>
    </ligand>
</feature>
<feature type="binding site" evidence="1">
    <location>
        <position position="101"/>
    </location>
    <ligand>
        <name>L-citrulline</name>
        <dbReference type="ChEBI" id="CHEBI:57743"/>
    </ligand>
</feature>
<feature type="binding site" evidence="1">
    <location>
        <position position="126"/>
    </location>
    <ligand>
        <name>ATP</name>
        <dbReference type="ChEBI" id="CHEBI:30616"/>
    </ligand>
</feature>
<feature type="binding site" evidence="1">
    <location>
        <position position="128"/>
    </location>
    <ligand>
        <name>L-aspartate</name>
        <dbReference type="ChEBI" id="CHEBI:29991"/>
    </ligand>
</feature>
<feature type="binding site" evidence="1">
    <location>
        <position position="132"/>
    </location>
    <ligand>
        <name>L-aspartate</name>
        <dbReference type="ChEBI" id="CHEBI:29991"/>
    </ligand>
</feature>
<feature type="binding site" evidence="1">
    <location>
        <position position="132"/>
    </location>
    <ligand>
        <name>L-citrulline</name>
        <dbReference type="ChEBI" id="CHEBI:57743"/>
    </ligand>
</feature>
<feature type="binding site" evidence="1">
    <location>
        <position position="133"/>
    </location>
    <ligand>
        <name>L-aspartate</name>
        <dbReference type="ChEBI" id="CHEBI:29991"/>
    </ligand>
</feature>
<feature type="binding site" evidence="1">
    <location>
        <position position="136"/>
    </location>
    <ligand>
        <name>L-citrulline</name>
        <dbReference type="ChEBI" id="CHEBI:57743"/>
    </ligand>
</feature>
<feature type="binding site" evidence="1">
    <location>
        <position position="185"/>
    </location>
    <ligand>
        <name>L-citrulline</name>
        <dbReference type="ChEBI" id="CHEBI:57743"/>
    </ligand>
</feature>
<feature type="binding site" evidence="1">
    <location>
        <position position="194"/>
    </location>
    <ligand>
        <name>L-citrulline</name>
        <dbReference type="ChEBI" id="CHEBI:57743"/>
    </ligand>
</feature>
<feature type="binding site" evidence="1">
    <location>
        <position position="270"/>
    </location>
    <ligand>
        <name>L-citrulline</name>
        <dbReference type="ChEBI" id="CHEBI:57743"/>
    </ligand>
</feature>
<feature type="binding site" evidence="1">
    <location>
        <position position="282"/>
    </location>
    <ligand>
        <name>L-citrulline</name>
        <dbReference type="ChEBI" id="CHEBI:57743"/>
    </ligand>
</feature>
<protein>
    <recommendedName>
        <fullName evidence="1">Argininosuccinate synthase</fullName>
        <ecNumber evidence="1">6.3.4.5</ecNumber>
    </recommendedName>
    <alternativeName>
        <fullName evidence="1">Citrulline--aspartate ligase</fullName>
    </alternativeName>
</protein>
<organism>
    <name type="scientific">Shewanella sediminis (strain HAW-EB3)</name>
    <dbReference type="NCBI Taxonomy" id="425104"/>
    <lineage>
        <taxon>Bacteria</taxon>
        <taxon>Pseudomonadati</taxon>
        <taxon>Pseudomonadota</taxon>
        <taxon>Gammaproteobacteria</taxon>
        <taxon>Alteromonadales</taxon>
        <taxon>Shewanellaceae</taxon>
        <taxon>Shewanella</taxon>
    </lineage>
</organism>
<accession>A8G1A4</accession>
<gene>
    <name evidence="1" type="primary">argG</name>
    <name type="ordered locus">Ssed_4273</name>
</gene>
<sequence length="407" mass="44605">MSNETKKTGVKKVVLAYSGGLDTSAIIPWLKETYDNCEIIAFCADVGQGDAELEGLHEKAISSGASECYIVDLKEELVADYIYPTIATGAIYEGTYLLGTSMARPIIAKAQVEVARKVGADAVCHGCTGKGNDQVRFEGCFAALAPDLKVIAPWREWEMVSREDLLDYLAERNIETTSSVTKIYSRDANAWHISHEGGELEDPWNEPTKGVWTMTVAPEDAPNEPEYVSLELEQGKITKVNGASLSPYGALTVLNEIAGAHGVGRIDITENRLVGMKSRGCYETPGGTVMFAALRAIEELVLDKSSREWREQIGAQMAHLVYDGRWFTPLCESLLAASIPLANLVSGEVVIKLYKGQAHAVKKRSENSLYSEEFATFGEDDVYNQKDAEGFIRLYSLASRIRALKAK</sequence>
<proteinExistence type="inferred from homology"/>
<keyword id="KW-0028">Amino-acid biosynthesis</keyword>
<keyword id="KW-0055">Arginine biosynthesis</keyword>
<keyword id="KW-0067">ATP-binding</keyword>
<keyword id="KW-0963">Cytoplasm</keyword>
<keyword id="KW-0436">Ligase</keyword>
<keyword id="KW-0547">Nucleotide-binding</keyword>
<keyword id="KW-1185">Reference proteome</keyword>
<name>ASSY_SHESH</name>
<evidence type="ECO:0000255" key="1">
    <source>
        <dbReference type="HAMAP-Rule" id="MF_00005"/>
    </source>
</evidence>
<dbReference type="EC" id="6.3.4.5" evidence="1"/>
<dbReference type="EMBL" id="CP000821">
    <property type="protein sequence ID" value="ABV38877.1"/>
    <property type="molecule type" value="Genomic_DNA"/>
</dbReference>
<dbReference type="RefSeq" id="WP_012144606.1">
    <property type="nucleotide sequence ID" value="NC_009831.1"/>
</dbReference>
<dbReference type="SMR" id="A8G1A4"/>
<dbReference type="STRING" id="425104.Ssed_4273"/>
<dbReference type="KEGG" id="sse:Ssed_4273"/>
<dbReference type="eggNOG" id="COG0137">
    <property type="taxonomic scope" value="Bacteria"/>
</dbReference>
<dbReference type="HOGENOM" id="CLU_032784_4_2_6"/>
<dbReference type="OrthoDB" id="9801641at2"/>
<dbReference type="UniPathway" id="UPA00068">
    <property type="reaction ID" value="UER00113"/>
</dbReference>
<dbReference type="Proteomes" id="UP000002015">
    <property type="component" value="Chromosome"/>
</dbReference>
<dbReference type="GO" id="GO:0005737">
    <property type="term" value="C:cytoplasm"/>
    <property type="evidence" value="ECO:0007669"/>
    <property type="project" value="UniProtKB-SubCell"/>
</dbReference>
<dbReference type="GO" id="GO:0004055">
    <property type="term" value="F:argininosuccinate synthase activity"/>
    <property type="evidence" value="ECO:0007669"/>
    <property type="project" value="UniProtKB-UniRule"/>
</dbReference>
<dbReference type="GO" id="GO:0005524">
    <property type="term" value="F:ATP binding"/>
    <property type="evidence" value="ECO:0007669"/>
    <property type="project" value="UniProtKB-UniRule"/>
</dbReference>
<dbReference type="GO" id="GO:0000053">
    <property type="term" value="P:argininosuccinate metabolic process"/>
    <property type="evidence" value="ECO:0007669"/>
    <property type="project" value="TreeGrafter"/>
</dbReference>
<dbReference type="GO" id="GO:0006526">
    <property type="term" value="P:L-arginine biosynthetic process"/>
    <property type="evidence" value="ECO:0007669"/>
    <property type="project" value="UniProtKB-UniRule"/>
</dbReference>
<dbReference type="GO" id="GO:0000050">
    <property type="term" value="P:urea cycle"/>
    <property type="evidence" value="ECO:0007669"/>
    <property type="project" value="TreeGrafter"/>
</dbReference>
<dbReference type="CDD" id="cd01999">
    <property type="entry name" value="ASS"/>
    <property type="match status" value="1"/>
</dbReference>
<dbReference type="FunFam" id="3.40.50.620:FF:000019">
    <property type="entry name" value="Argininosuccinate synthase"/>
    <property type="match status" value="1"/>
</dbReference>
<dbReference type="FunFam" id="3.90.1260.10:FF:000007">
    <property type="entry name" value="Argininosuccinate synthase"/>
    <property type="match status" value="1"/>
</dbReference>
<dbReference type="Gene3D" id="3.90.1260.10">
    <property type="entry name" value="Argininosuccinate synthetase, chain A, domain 2"/>
    <property type="match status" value="1"/>
</dbReference>
<dbReference type="Gene3D" id="3.40.50.620">
    <property type="entry name" value="HUPs"/>
    <property type="match status" value="1"/>
</dbReference>
<dbReference type="Gene3D" id="1.20.5.470">
    <property type="entry name" value="Single helix bin"/>
    <property type="match status" value="1"/>
</dbReference>
<dbReference type="HAMAP" id="MF_00005">
    <property type="entry name" value="Arg_succ_synth_type1"/>
    <property type="match status" value="1"/>
</dbReference>
<dbReference type="InterPro" id="IPR048268">
    <property type="entry name" value="Arginosuc_syn_C"/>
</dbReference>
<dbReference type="InterPro" id="IPR048267">
    <property type="entry name" value="Arginosuc_syn_N"/>
</dbReference>
<dbReference type="InterPro" id="IPR001518">
    <property type="entry name" value="Arginosuc_synth"/>
</dbReference>
<dbReference type="InterPro" id="IPR018223">
    <property type="entry name" value="Arginosuc_synth_CS"/>
</dbReference>
<dbReference type="InterPro" id="IPR023434">
    <property type="entry name" value="Arginosuc_synth_type_1_subfam"/>
</dbReference>
<dbReference type="InterPro" id="IPR024074">
    <property type="entry name" value="AS_cat/multimer_dom_body"/>
</dbReference>
<dbReference type="InterPro" id="IPR014729">
    <property type="entry name" value="Rossmann-like_a/b/a_fold"/>
</dbReference>
<dbReference type="NCBIfam" id="TIGR00032">
    <property type="entry name" value="argG"/>
    <property type="match status" value="1"/>
</dbReference>
<dbReference type="NCBIfam" id="NF001770">
    <property type="entry name" value="PRK00509.1"/>
    <property type="match status" value="1"/>
</dbReference>
<dbReference type="PANTHER" id="PTHR11587">
    <property type="entry name" value="ARGININOSUCCINATE SYNTHASE"/>
    <property type="match status" value="1"/>
</dbReference>
<dbReference type="PANTHER" id="PTHR11587:SF2">
    <property type="entry name" value="ARGININOSUCCINATE SYNTHASE"/>
    <property type="match status" value="1"/>
</dbReference>
<dbReference type="Pfam" id="PF20979">
    <property type="entry name" value="Arginosuc_syn_C"/>
    <property type="match status" value="1"/>
</dbReference>
<dbReference type="Pfam" id="PF00764">
    <property type="entry name" value="Arginosuc_synth"/>
    <property type="match status" value="1"/>
</dbReference>
<dbReference type="SUPFAM" id="SSF52402">
    <property type="entry name" value="Adenine nucleotide alpha hydrolases-like"/>
    <property type="match status" value="1"/>
</dbReference>
<dbReference type="SUPFAM" id="SSF69864">
    <property type="entry name" value="Argininosuccinate synthetase, C-terminal domain"/>
    <property type="match status" value="1"/>
</dbReference>
<dbReference type="PROSITE" id="PS00564">
    <property type="entry name" value="ARGININOSUCCIN_SYN_1"/>
    <property type="match status" value="1"/>
</dbReference>
<dbReference type="PROSITE" id="PS00565">
    <property type="entry name" value="ARGININOSUCCIN_SYN_2"/>
    <property type="match status" value="1"/>
</dbReference>
<comment type="catalytic activity">
    <reaction evidence="1">
        <text>L-citrulline + L-aspartate + ATP = 2-(N(omega)-L-arginino)succinate + AMP + diphosphate + H(+)</text>
        <dbReference type="Rhea" id="RHEA:10932"/>
        <dbReference type="ChEBI" id="CHEBI:15378"/>
        <dbReference type="ChEBI" id="CHEBI:29991"/>
        <dbReference type="ChEBI" id="CHEBI:30616"/>
        <dbReference type="ChEBI" id="CHEBI:33019"/>
        <dbReference type="ChEBI" id="CHEBI:57472"/>
        <dbReference type="ChEBI" id="CHEBI:57743"/>
        <dbReference type="ChEBI" id="CHEBI:456215"/>
        <dbReference type="EC" id="6.3.4.5"/>
    </reaction>
</comment>
<comment type="pathway">
    <text evidence="1">Amino-acid biosynthesis; L-arginine biosynthesis; L-arginine from L-ornithine and carbamoyl phosphate: step 2/3.</text>
</comment>
<comment type="subunit">
    <text evidence="1">Homotetramer.</text>
</comment>
<comment type="subcellular location">
    <subcellularLocation>
        <location evidence="1">Cytoplasm</location>
    </subcellularLocation>
</comment>
<comment type="similarity">
    <text evidence="1">Belongs to the argininosuccinate synthase family. Type 1 subfamily.</text>
</comment>